<protein>
    <recommendedName>
        <fullName evidence="1">Enolase</fullName>
        <ecNumber evidence="1">4.2.1.11</ecNumber>
    </recommendedName>
    <alternativeName>
        <fullName evidence="1">2-phospho-D-glycerate hydro-lyase</fullName>
    </alternativeName>
    <alternativeName>
        <fullName evidence="1">2-phosphoglycerate dehydratase</fullName>
    </alternativeName>
</protein>
<dbReference type="EC" id="4.2.1.11" evidence="1"/>
<dbReference type="EMBL" id="CP000560">
    <property type="protein sequence ID" value="ABS75457.1"/>
    <property type="molecule type" value="Genomic_DNA"/>
</dbReference>
<dbReference type="RefSeq" id="WP_007409956.1">
    <property type="nucleotide sequence ID" value="NC_009725.2"/>
</dbReference>
<dbReference type="SMR" id="A7Z8Y1"/>
<dbReference type="GeneID" id="93082270"/>
<dbReference type="KEGG" id="bay:RBAM_031260"/>
<dbReference type="HOGENOM" id="CLU_031223_2_1_9"/>
<dbReference type="UniPathway" id="UPA00109">
    <property type="reaction ID" value="UER00187"/>
</dbReference>
<dbReference type="Proteomes" id="UP000001120">
    <property type="component" value="Chromosome"/>
</dbReference>
<dbReference type="GO" id="GO:0009986">
    <property type="term" value="C:cell surface"/>
    <property type="evidence" value="ECO:0007669"/>
    <property type="project" value="UniProtKB-SubCell"/>
</dbReference>
<dbReference type="GO" id="GO:0005576">
    <property type="term" value="C:extracellular region"/>
    <property type="evidence" value="ECO:0007669"/>
    <property type="project" value="UniProtKB-SubCell"/>
</dbReference>
<dbReference type="GO" id="GO:0000015">
    <property type="term" value="C:phosphopyruvate hydratase complex"/>
    <property type="evidence" value="ECO:0007669"/>
    <property type="project" value="InterPro"/>
</dbReference>
<dbReference type="GO" id="GO:0000287">
    <property type="term" value="F:magnesium ion binding"/>
    <property type="evidence" value="ECO:0007669"/>
    <property type="project" value="UniProtKB-UniRule"/>
</dbReference>
<dbReference type="GO" id="GO:0004634">
    <property type="term" value="F:phosphopyruvate hydratase activity"/>
    <property type="evidence" value="ECO:0007669"/>
    <property type="project" value="UniProtKB-UniRule"/>
</dbReference>
<dbReference type="GO" id="GO:0006096">
    <property type="term" value="P:glycolytic process"/>
    <property type="evidence" value="ECO:0007669"/>
    <property type="project" value="UniProtKB-UniRule"/>
</dbReference>
<dbReference type="CDD" id="cd03313">
    <property type="entry name" value="enolase"/>
    <property type="match status" value="1"/>
</dbReference>
<dbReference type="FunFam" id="3.20.20.120:FF:000001">
    <property type="entry name" value="Enolase"/>
    <property type="match status" value="1"/>
</dbReference>
<dbReference type="FunFam" id="3.30.390.10:FF:000001">
    <property type="entry name" value="Enolase"/>
    <property type="match status" value="1"/>
</dbReference>
<dbReference type="Gene3D" id="3.20.20.120">
    <property type="entry name" value="Enolase-like C-terminal domain"/>
    <property type="match status" value="1"/>
</dbReference>
<dbReference type="Gene3D" id="3.30.390.10">
    <property type="entry name" value="Enolase-like, N-terminal domain"/>
    <property type="match status" value="1"/>
</dbReference>
<dbReference type="HAMAP" id="MF_00318">
    <property type="entry name" value="Enolase"/>
    <property type="match status" value="1"/>
</dbReference>
<dbReference type="InterPro" id="IPR000941">
    <property type="entry name" value="Enolase"/>
</dbReference>
<dbReference type="InterPro" id="IPR036849">
    <property type="entry name" value="Enolase-like_C_sf"/>
</dbReference>
<dbReference type="InterPro" id="IPR029017">
    <property type="entry name" value="Enolase-like_N"/>
</dbReference>
<dbReference type="InterPro" id="IPR020810">
    <property type="entry name" value="Enolase_C"/>
</dbReference>
<dbReference type="InterPro" id="IPR020809">
    <property type="entry name" value="Enolase_CS"/>
</dbReference>
<dbReference type="InterPro" id="IPR020811">
    <property type="entry name" value="Enolase_N"/>
</dbReference>
<dbReference type="NCBIfam" id="TIGR01060">
    <property type="entry name" value="eno"/>
    <property type="match status" value="1"/>
</dbReference>
<dbReference type="PANTHER" id="PTHR11902">
    <property type="entry name" value="ENOLASE"/>
    <property type="match status" value="1"/>
</dbReference>
<dbReference type="PANTHER" id="PTHR11902:SF1">
    <property type="entry name" value="ENOLASE"/>
    <property type="match status" value="1"/>
</dbReference>
<dbReference type="Pfam" id="PF00113">
    <property type="entry name" value="Enolase_C"/>
    <property type="match status" value="1"/>
</dbReference>
<dbReference type="Pfam" id="PF03952">
    <property type="entry name" value="Enolase_N"/>
    <property type="match status" value="1"/>
</dbReference>
<dbReference type="PIRSF" id="PIRSF001400">
    <property type="entry name" value="Enolase"/>
    <property type="match status" value="1"/>
</dbReference>
<dbReference type="PRINTS" id="PR00148">
    <property type="entry name" value="ENOLASE"/>
</dbReference>
<dbReference type="SFLD" id="SFLDS00001">
    <property type="entry name" value="Enolase"/>
    <property type="match status" value="1"/>
</dbReference>
<dbReference type="SFLD" id="SFLDF00002">
    <property type="entry name" value="enolase"/>
    <property type="match status" value="1"/>
</dbReference>
<dbReference type="SMART" id="SM01192">
    <property type="entry name" value="Enolase_C"/>
    <property type="match status" value="1"/>
</dbReference>
<dbReference type="SMART" id="SM01193">
    <property type="entry name" value="Enolase_N"/>
    <property type="match status" value="1"/>
</dbReference>
<dbReference type="SUPFAM" id="SSF51604">
    <property type="entry name" value="Enolase C-terminal domain-like"/>
    <property type="match status" value="1"/>
</dbReference>
<dbReference type="SUPFAM" id="SSF54826">
    <property type="entry name" value="Enolase N-terminal domain-like"/>
    <property type="match status" value="1"/>
</dbReference>
<dbReference type="PROSITE" id="PS00164">
    <property type="entry name" value="ENOLASE"/>
    <property type="match status" value="1"/>
</dbReference>
<sequence>MPYIVDVYAREVLDSRGNPTVEVEVYTETGAFGRALVPSGASTGEYEAVELRDGDKDRYLGKGVLTAVNNVNEIISPELLGFDVTEQNAIDQLLIELDGTENKGKLGANAILGVSMACARAAADFLQIPLYQYLGGFNSKTLPVPMMNIVNGGEHADNNVDIQEFMIMPVGAPNFREALRMGAQIFHSLKSVLSAKGMNTAVGDEGGFAPNLGSNEEALQTIVEAIEKAGFKPGEEVKLAMDAASSEFYNKEDGKYHLSGEGVVKTSAEMVDWYEEMVSKYPIISIEDGLDENDWEGHKLLTERLGKKVQLVGDDLFVTNTKKLAEGIKNGVGNSILIKVNQIGTLTETFDAIEMAKRAGYTAVISHRSGETEDSTIADIAVATNAGQIKTGAPSRTDRVAKYNQLLRIEDQLAETAQYHGINSFYNLNK</sequence>
<comment type="function">
    <text evidence="1">Catalyzes the reversible conversion of 2-phosphoglycerate (2-PG) into phosphoenolpyruvate (PEP). It is essential for the degradation of carbohydrates via glycolysis.</text>
</comment>
<comment type="catalytic activity">
    <reaction evidence="1">
        <text>(2R)-2-phosphoglycerate = phosphoenolpyruvate + H2O</text>
        <dbReference type="Rhea" id="RHEA:10164"/>
        <dbReference type="ChEBI" id="CHEBI:15377"/>
        <dbReference type="ChEBI" id="CHEBI:58289"/>
        <dbReference type="ChEBI" id="CHEBI:58702"/>
        <dbReference type="EC" id="4.2.1.11"/>
    </reaction>
</comment>
<comment type="cofactor">
    <cofactor evidence="1">
        <name>Mg(2+)</name>
        <dbReference type="ChEBI" id="CHEBI:18420"/>
    </cofactor>
    <text evidence="1">Binds a second Mg(2+) ion via substrate during catalysis.</text>
</comment>
<comment type="pathway">
    <text evidence="1">Carbohydrate degradation; glycolysis; pyruvate from D-glyceraldehyde 3-phosphate: step 4/5.</text>
</comment>
<comment type="subcellular location">
    <subcellularLocation>
        <location evidence="1">Cytoplasm</location>
    </subcellularLocation>
    <subcellularLocation>
        <location evidence="1">Secreted</location>
    </subcellularLocation>
    <subcellularLocation>
        <location evidence="1">Cell surface</location>
    </subcellularLocation>
    <text evidence="1">Fractions of enolase are present in both the cytoplasm and on the cell surface.</text>
</comment>
<comment type="similarity">
    <text evidence="1">Belongs to the enolase family.</text>
</comment>
<proteinExistence type="inferred from homology"/>
<reference key="1">
    <citation type="journal article" date="2007" name="Nat. Biotechnol.">
        <title>Comparative analysis of the complete genome sequence of the plant growth-promoting bacterium Bacillus amyloliquefaciens FZB42.</title>
        <authorList>
            <person name="Chen X.H."/>
            <person name="Koumoutsi A."/>
            <person name="Scholz R."/>
            <person name="Eisenreich A."/>
            <person name="Schneider K."/>
            <person name="Heinemeyer I."/>
            <person name="Morgenstern B."/>
            <person name="Voss B."/>
            <person name="Hess W.R."/>
            <person name="Reva O."/>
            <person name="Junge H."/>
            <person name="Voigt B."/>
            <person name="Jungblut P.R."/>
            <person name="Vater J."/>
            <person name="Suessmuth R."/>
            <person name="Liesegang H."/>
            <person name="Strittmatter A."/>
            <person name="Gottschalk G."/>
            <person name="Borriss R."/>
        </authorList>
    </citation>
    <scope>NUCLEOTIDE SEQUENCE [LARGE SCALE GENOMIC DNA]</scope>
    <source>
        <strain>DSM 23117 / BGSC 10A6 / LMG 26770 / FZB42</strain>
    </source>
</reference>
<keyword id="KW-0963">Cytoplasm</keyword>
<keyword id="KW-0324">Glycolysis</keyword>
<keyword id="KW-0456">Lyase</keyword>
<keyword id="KW-0460">Magnesium</keyword>
<keyword id="KW-0479">Metal-binding</keyword>
<keyword id="KW-0964">Secreted</keyword>
<gene>
    <name evidence="1" type="primary">eno</name>
    <name type="ordered locus">RBAM_031260</name>
</gene>
<evidence type="ECO:0000255" key="1">
    <source>
        <dbReference type="HAMAP-Rule" id="MF_00318"/>
    </source>
</evidence>
<feature type="chain" id="PRO_1000019185" description="Enolase">
    <location>
        <begin position="1"/>
        <end position="430"/>
    </location>
</feature>
<feature type="active site" description="Proton donor" evidence="1">
    <location>
        <position position="205"/>
    </location>
</feature>
<feature type="active site" description="Proton acceptor" evidence="1">
    <location>
        <position position="339"/>
    </location>
</feature>
<feature type="binding site" evidence="1">
    <location>
        <position position="163"/>
    </location>
    <ligand>
        <name>(2R)-2-phosphoglycerate</name>
        <dbReference type="ChEBI" id="CHEBI:58289"/>
    </ligand>
</feature>
<feature type="binding site" evidence="1">
    <location>
        <position position="242"/>
    </location>
    <ligand>
        <name>Mg(2+)</name>
        <dbReference type="ChEBI" id="CHEBI:18420"/>
    </ligand>
</feature>
<feature type="binding site" evidence="1">
    <location>
        <position position="287"/>
    </location>
    <ligand>
        <name>Mg(2+)</name>
        <dbReference type="ChEBI" id="CHEBI:18420"/>
    </ligand>
</feature>
<feature type="binding site" evidence="1">
    <location>
        <position position="314"/>
    </location>
    <ligand>
        <name>Mg(2+)</name>
        <dbReference type="ChEBI" id="CHEBI:18420"/>
    </ligand>
</feature>
<feature type="binding site" evidence="1">
    <location>
        <position position="339"/>
    </location>
    <ligand>
        <name>(2R)-2-phosphoglycerate</name>
        <dbReference type="ChEBI" id="CHEBI:58289"/>
    </ligand>
</feature>
<feature type="binding site" evidence="1">
    <location>
        <position position="368"/>
    </location>
    <ligand>
        <name>(2R)-2-phosphoglycerate</name>
        <dbReference type="ChEBI" id="CHEBI:58289"/>
    </ligand>
</feature>
<feature type="binding site" evidence="1">
    <location>
        <position position="369"/>
    </location>
    <ligand>
        <name>(2R)-2-phosphoglycerate</name>
        <dbReference type="ChEBI" id="CHEBI:58289"/>
    </ligand>
</feature>
<feature type="binding site" evidence="1">
    <location>
        <position position="390"/>
    </location>
    <ligand>
        <name>(2R)-2-phosphoglycerate</name>
        <dbReference type="ChEBI" id="CHEBI:58289"/>
    </ligand>
</feature>
<name>ENO_BACVZ</name>
<accession>A7Z8Y1</accession>
<organism>
    <name type="scientific">Bacillus velezensis (strain DSM 23117 / BGSC 10A6 / LMG 26770 / FZB42)</name>
    <name type="common">Bacillus amyloliquefaciens subsp. plantarum</name>
    <dbReference type="NCBI Taxonomy" id="326423"/>
    <lineage>
        <taxon>Bacteria</taxon>
        <taxon>Bacillati</taxon>
        <taxon>Bacillota</taxon>
        <taxon>Bacilli</taxon>
        <taxon>Bacillales</taxon>
        <taxon>Bacillaceae</taxon>
        <taxon>Bacillus</taxon>
        <taxon>Bacillus amyloliquefaciens group</taxon>
    </lineage>
</organism>